<protein>
    <recommendedName>
        <fullName>Bacterial non-heme ferritin</fullName>
        <ecNumber>1.16.3.2</ecNumber>
    </recommendedName>
</protein>
<accession>P0CJ83</accession>
<accession>P28733</accession>
<accession>Q9AEU4</accession>
<sequence length="159" mass="18064">MISEKLQNAINEQISAEMWSSNLYLSMSFYFEREGFSGFAHWMKKQSQEEMGHAYAMADYIIKRGGIAKVDKIDVVPTGWGTPLEVFEHVFEHERHVSKLVDALVDIAAAEKDKATQDFLWGFVREQVEEEATAQGIVDKIKRAGDAGIFFIDSQLGQR</sequence>
<gene>
    <name type="primary">ftnA</name>
    <name type="ordered locus">BF3048</name>
</gene>
<comment type="function">
    <text>May alleviate iron toxicity in the presence of oxygen.</text>
</comment>
<comment type="catalytic activity">
    <reaction>
        <text>4 Fe(2+) + O2 + 6 H2O = 4 iron(III) oxide-hydroxide + 12 H(+)</text>
        <dbReference type="Rhea" id="RHEA:11972"/>
        <dbReference type="ChEBI" id="CHEBI:15377"/>
        <dbReference type="ChEBI" id="CHEBI:15378"/>
        <dbReference type="ChEBI" id="CHEBI:15379"/>
        <dbReference type="ChEBI" id="CHEBI:29033"/>
        <dbReference type="ChEBI" id="CHEBI:78619"/>
        <dbReference type="EC" id="1.16.3.2"/>
    </reaction>
</comment>
<comment type="subunit">
    <text evidence="1">Homooligomer of 24 subunits that assemble into a spherical protein shell (12 +/- 1 nM diameter) that can sequester at least 2000 iron atoms.</text>
</comment>
<comment type="similarity">
    <text evidence="3">Belongs to the ferritin family. Prokaryotic subfamily.</text>
</comment>
<feature type="chain" id="PRO_0000201098" description="Bacterial non-heme ferritin">
    <location>
        <begin position="1"/>
        <end position="159"/>
    </location>
</feature>
<feature type="domain" description="Ferritin-like diiron" evidence="2">
    <location>
        <begin position="1"/>
        <end position="145"/>
    </location>
</feature>
<feature type="binding site" evidence="2">
    <location>
        <position position="17"/>
    </location>
    <ligand>
        <name>Fe cation</name>
        <dbReference type="ChEBI" id="CHEBI:24875"/>
        <label>1</label>
    </ligand>
</feature>
<feature type="binding site" evidence="2">
    <location>
        <position position="50"/>
    </location>
    <ligand>
        <name>Fe cation</name>
        <dbReference type="ChEBI" id="CHEBI:24875"/>
        <label>1</label>
    </ligand>
</feature>
<feature type="binding site" evidence="2">
    <location>
        <position position="50"/>
    </location>
    <ligand>
        <name>Fe cation</name>
        <dbReference type="ChEBI" id="CHEBI:24875"/>
        <label>2</label>
    </ligand>
</feature>
<feature type="binding site" evidence="2">
    <location>
        <position position="53"/>
    </location>
    <ligand>
        <name>Fe cation</name>
        <dbReference type="ChEBI" id="CHEBI:24875"/>
        <label>1</label>
    </ligand>
</feature>
<feature type="binding site" evidence="2">
    <location>
        <position position="94"/>
    </location>
    <ligand>
        <name>Fe cation</name>
        <dbReference type="ChEBI" id="CHEBI:24875"/>
        <label>2</label>
    </ligand>
</feature>
<feature type="binding site" evidence="2">
    <location>
        <position position="127"/>
    </location>
    <ligand>
        <name>Fe cation</name>
        <dbReference type="ChEBI" id="CHEBI:24875"/>
        <label>2</label>
    </ligand>
</feature>
<keyword id="KW-0903">Direct protein sequencing</keyword>
<keyword id="KW-0408">Iron</keyword>
<keyword id="KW-0409">Iron storage</keyword>
<keyword id="KW-0479">Metal-binding</keyword>
<keyword id="KW-0560">Oxidoreductase</keyword>
<reference key="1">
    <citation type="journal article" date="2004" name="Proc. Natl. Acad. Sci. U.S.A.">
        <title>Genomic analysis of Bacteroides fragilis reveals extensive DNA inversions regulating cell surface adaptation.</title>
        <authorList>
            <person name="Kuwahara T."/>
            <person name="Yamashita A."/>
            <person name="Hirakawa H."/>
            <person name="Nakayama H."/>
            <person name="Toh H."/>
            <person name="Okada N."/>
            <person name="Kuhara S."/>
            <person name="Hattori M."/>
            <person name="Hayashi T."/>
            <person name="Ohnishi Y."/>
        </authorList>
    </citation>
    <scope>NUCLEOTIDE SEQUENCE [LARGE SCALE GENOMIC DNA]</scope>
    <source>
        <strain>YCH46</strain>
    </source>
</reference>
<reference key="2">
    <citation type="journal article" date="1992" name="FEMS Microbiol. Lett.">
        <title>Isolation of a ferritin from Bacteroides fragilis.</title>
        <authorList>
            <person name="Rocha E.R."/>
            <person name="Andrews S.C."/>
            <person name="Keen J.N."/>
            <person name="Brock J.H."/>
        </authorList>
    </citation>
    <scope>PROTEIN SEQUENCE OF 1-30</scope>
    <scope>SUBUNIT</scope>
    <source>
        <strain>20656-2-1</strain>
    </source>
</reference>
<proteinExistence type="evidence at protein level"/>
<evidence type="ECO:0000250" key="1"/>
<evidence type="ECO:0000255" key="2">
    <source>
        <dbReference type="PROSITE-ProRule" id="PRU00085"/>
    </source>
</evidence>
<evidence type="ECO:0000305" key="3"/>
<name>FTN_BACFR</name>
<organism>
    <name type="scientific">Bacteroides fragilis (strain YCH46)</name>
    <dbReference type="NCBI Taxonomy" id="295405"/>
    <lineage>
        <taxon>Bacteria</taxon>
        <taxon>Pseudomonadati</taxon>
        <taxon>Bacteroidota</taxon>
        <taxon>Bacteroidia</taxon>
        <taxon>Bacteroidales</taxon>
        <taxon>Bacteroidaceae</taxon>
        <taxon>Bacteroides</taxon>
    </lineage>
</organism>
<dbReference type="EC" id="1.16.3.2"/>
<dbReference type="EMBL" id="AP006841">
    <property type="protein sequence ID" value="BAD49794.1"/>
    <property type="molecule type" value="Genomic_DNA"/>
</dbReference>
<dbReference type="RefSeq" id="WP_005788812.1">
    <property type="nucleotide sequence ID" value="NZ_UYXF01000004.1"/>
</dbReference>
<dbReference type="RefSeq" id="YP_100328.1">
    <property type="nucleotide sequence ID" value="NC_006347.1"/>
</dbReference>
<dbReference type="SMR" id="P0CJ83"/>
<dbReference type="STRING" id="295405.BF3048"/>
<dbReference type="KEGG" id="bfr:BF3048"/>
<dbReference type="PATRIC" id="fig|295405.11.peg.2916"/>
<dbReference type="HOGENOM" id="CLU_065681_1_2_10"/>
<dbReference type="OrthoDB" id="9801481at2"/>
<dbReference type="BRENDA" id="1.16.3.2">
    <property type="organism ID" value="755"/>
</dbReference>
<dbReference type="Proteomes" id="UP000002197">
    <property type="component" value="Chromosome"/>
</dbReference>
<dbReference type="GO" id="GO:0005829">
    <property type="term" value="C:cytosol"/>
    <property type="evidence" value="ECO:0007669"/>
    <property type="project" value="TreeGrafter"/>
</dbReference>
<dbReference type="GO" id="GO:0008199">
    <property type="term" value="F:ferric iron binding"/>
    <property type="evidence" value="ECO:0007669"/>
    <property type="project" value="InterPro"/>
</dbReference>
<dbReference type="GO" id="GO:0008198">
    <property type="term" value="F:ferrous iron binding"/>
    <property type="evidence" value="ECO:0007669"/>
    <property type="project" value="TreeGrafter"/>
</dbReference>
<dbReference type="GO" id="GO:0004322">
    <property type="term" value="F:ferroxidase activity"/>
    <property type="evidence" value="ECO:0007669"/>
    <property type="project" value="TreeGrafter"/>
</dbReference>
<dbReference type="GO" id="GO:0006879">
    <property type="term" value="P:intracellular iron ion homeostasis"/>
    <property type="evidence" value="ECO:0007669"/>
    <property type="project" value="UniProtKB-KW"/>
</dbReference>
<dbReference type="GO" id="GO:0006826">
    <property type="term" value="P:iron ion transport"/>
    <property type="evidence" value="ECO:0007669"/>
    <property type="project" value="InterPro"/>
</dbReference>
<dbReference type="CDD" id="cd01055">
    <property type="entry name" value="Nonheme_Ferritin"/>
    <property type="match status" value="1"/>
</dbReference>
<dbReference type="FunFam" id="1.20.1260.10:FF:000001">
    <property type="entry name" value="Non-heme ferritin"/>
    <property type="match status" value="1"/>
</dbReference>
<dbReference type="Gene3D" id="1.20.1260.10">
    <property type="match status" value="1"/>
</dbReference>
<dbReference type="InterPro" id="IPR001519">
    <property type="entry name" value="Ferritin"/>
</dbReference>
<dbReference type="InterPro" id="IPR012347">
    <property type="entry name" value="Ferritin-like"/>
</dbReference>
<dbReference type="InterPro" id="IPR009040">
    <property type="entry name" value="Ferritin-like_diiron"/>
</dbReference>
<dbReference type="InterPro" id="IPR009078">
    <property type="entry name" value="Ferritin-like_SF"/>
</dbReference>
<dbReference type="InterPro" id="IPR008331">
    <property type="entry name" value="Ferritin_DPS_dom"/>
</dbReference>
<dbReference type="InterPro" id="IPR041719">
    <property type="entry name" value="Ferritin_prok"/>
</dbReference>
<dbReference type="PANTHER" id="PTHR11431:SF127">
    <property type="entry name" value="BACTERIAL NON-HEME FERRITIN"/>
    <property type="match status" value="1"/>
</dbReference>
<dbReference type="PANTHER" id="PTHR11431">
    <property type="entry name" value="FERRITIN"/>
    <property type="match status" value="1"/>
</dbReference>
<dbReference type="Pfam" id="PF00210">
    <property type="entry name" value="Ferritin"/>
    <property type="match status" value="1"/>
</dbReference>
<dbReference type="SUPFAM" id="SSF47240">
    <property type="entry name" value="Ferritin-like"/>
    <property type="match status" value="1"/>
</dbReference>
<dbReference type="PROSITE" id="PS50905">
    <property type="entry name" value="FERRITIN_LIKE"/>
    <property type="match status" value="1"/>
</dbReference>